<gene>
    <name type="ORF">T3C</name>
</gene>
<sequence length="131" mass="15487">MLCIFYIARLCNLIIYSLYSLLMFPMQKLISFMFGNLNPFDSVLDKDEKIQDNINTNHKPIESKEINNDLPLTVLDKKDTSDINIRNDNGVFDFIKIPNPFKKHYEYYCNQNTIKEPPRKGLVERMMNMVE</sequence>
<organismHost>
    <name type="scientific">Ovis aries</name>
    <name type="common">Sheep</name>
    <dbReference type="NCBI Taxonomy" id="9940"/>
</organismHost>
<reference key="1">
    <citation type="journal article" date="1989" name="Virology">
        <title>A capripoxvirus pseudogene whose only intact homologs are in other poxvirus genomes.</title>
        <authorList>
            <person name="Gershon P.D."/>
            <person name="Black D.N."/>
        </authorList>
    </citation>
    <scope>NUCLEOTIDE SEQUENCE [GENOMIC DNA]</scope>
</reference>
<proteinExistence type="predicted"/>
<feature type="chain" id="PRO_0000099738" description="T3C protein">
    <location>
        <begin position="1"/>
        <end position="131"/>
    </location>
</feature>
<organism>
    <name type="scientific">Sheeppox virus (strain KS-1)</name>
    <name type="common">SPPV</name>
    <name type="synonym">Capripoxvirus (strain KS-1)</name>
    <dbReference type="NCBI Taxonomy" id="10269"/>
    <lineage>
        <taxon>Viruses</taxon>
        <taxon>Varidnaviria</taxon>
        <taxon>Bamfordvirae</taxon>
        <taxon>Nucleocytoviricota</taxon>
        <taxon>Pokkesviricetes</taxon>
        <taxon>Chitovirales</taxon>
        <taxon>Poxviridae</taxon>
        <taxon>Chordopoxvirinae</taxon>
        <taxon>Capripoxvirus</taxon>
        <taxon>Sheeppox virus</taxon>
    </lineage>
</organism>
<name>VT3C_SHEVK</name>
<dbReference type="EMBL" id="M28824">
    <property type="protein sequence ID" value="AAC32895.1"/>
    <property type="molecule type" value="Genomic_DNA"/>
</dbReference>
<dbReference type="PIR" id="C33869">
    <property type="entry name" value="WMVZN3"/>
</dbReference>
<dbReference type="SMR" id="P18388"/>
<dbReference type="InterPro" id="IPR020356">
    <property type="entry name" value="Poxvirus_T3C"/>
</dbReference>
<dbReference type="Pfam" id="PF10918">
    <property type="entry name" value="DUF2718"/>
    <property type="match status" value="1"/>
</dbReference>
<protein>
    <recommendedName>
        <fullName>T3C protein</fullName>
    </recommendedName>
</protein>
<accession>P18388</accession>